<proteinExistence type="evidence at transcript level"/>
<name>CAST1_BOVIN</name>
<protein>
    <recommendedName>
        <fullName evidence="1">Cytosolic arginine sensor for mTORC1 subunit 1</fullName>
    </recommendedName>
    <alternativeName>
        <fullName evidence="2">GATS-like protein 3</fullName>
    </alternativeName>
</protein>
<evidence type="ECO:0000250" key="1">
    <source>
        <dbReference type="UniProtKB" id="Q8WTX7"/>
    </source>
</evidence>
<evidence type="ECO:0000305" key="2"/>
<sequence length="329" mass="36041">MELHILEHRVRVLSLARPGLWLYTHPLIKLLFLPRRSRCKFFSLTETPEDYTLMVDEEGFKELPPSEFLQVAEATWLVLNVSSPSGAAVQAAGVTKIARSVIAPLAEHHVSVLMLSTYQTDFILVREQDLSVVIHTLAREFDIYREVGGEPVPVARDDSSNGFPRAQHGPSPTVHPIQSPQNRFCVLTLDPETLPAIATTLIDVLFYSHSPPREAASGGPGSSSIAFFAFSLIEGYISIVMDAETQKKFPSDLLLTSSSGELWRMVRIGGQPLGFDECGIVAQIAGPLAAADISAYYISTFNFDHALVPEDGIGSVIEVLQRRQDGLGS</sequence>
<accession>Q0V8A3</accession>
<keyword id="KW-0963">Cytoplasm</keyword>
<keyword id="KW-0597">Phosphoprotein</keyword>
<keyword id="KW-1185">Reference proteome</keyword>
<keyword id="KW-0832">Ubl conjugation</keyword>
<comment type="function">
    <text evidence="1">Functions as an intracellular arginine sensor within the amino acid-sensing branch of the TORC1 signaling pathway. As a homodimer or a heterodimer with CASTOR2, binds and inhibits the GATOR subcomplex GATOR2 and thereby mTORC1. Binding of arginine to CASTOR1 allosterically disrupts the interaction of CASTOR1-containing dimers with GATOR2 which can in turn activate mTORC1 and the TORC1 signaling pathway.</text>
</comment>
<comment type="subunit">
    <text evidence="1">Forms homodimers and heterodimers with CASTOR2 (By similarity). Interacts with the GATOR2 complex which is composed of MIOS, SEC13, SEH1L, WDR24 and WDR59; the interaction is negatively regulated by arginine (By similarity). Interacts with TM4SF5; the interaction is positively regulated by leucine and is negatively regulated by arginine (By similarity).</text>
</comment>
<comment type="subcellular location">
    <subcellularLocation>
        <location evidence="1">Cytoplasm</location>
        <location evidence="1">Cytosol</location>
    </subcellularLocation>
</comment>
<comment type="domain">
    <text evidence="1">Based on x-ray crystallography data, the protein would be constituted of 4 tandem ACT domains instead of the 2 predicted from the sequence.</text>
</comment>
<comment type="PTM">
    <text evidence="1">Phosphorylation at Ser-14 by AKT1, promoting the interaction between CASTOR1 and RNF167.</text>
</comment>
<comment type="PTM">
    <text evidence="1">Ubiquitinated by RNF167 via 'Lys-29'-polyubiquitination, leading to its degradation, releasing the GATOR2 complex. Ubiquitination by RNF167 is promoted by phosphorylation at Ser-14 by AKT1.</text>
</comment>
<comment type="similarity">
    <text evidence="2">Belongs to the GATS family.</text>
</comment>
<reference key="1">
    <citation type="journal article" date="2005" name="BMC Genomics">
        <title>Characterization of 954 bovine full-CDS cDNA sequences.</title>
        <authorList>
            <person name="Harhay G.P."/>
            <person name="Sonstegard T.S."/>
            <person name="Keele J.W."/>
            <person name="Heaton M.P."/>
            <person name="Clawson M.L."/>
            <person name="Snelling W.M."/>
            <person name="Wiedmann R.T."/>
            <person name="Van Tassell C.P."/>
            <person name="Smith T.P.L."/>
        </authorList>
    </citation>
    <scope>NUCLEOTIDE SEQUENCE [LARGE SCALE MRNA]</scope>
</reference>
<feature type="chain" id="PRO_0000348589" description="Cytosolic arginine sensor for mTORC1 subunit 1">
    <location>
        <begin position="1"/>
        <end position="329"/>
    </location>
</feature>
<feature type="domain" description="ACT 1">
    <location>
        <begin position="72"/>
        <end position="138"/>
    </location>
</feature>
<feature type="domain" description="ACT 2">
    <location>
        <begin position="260"/>
        <end position="321"/>
    </location>
</feature>
<feature type="binding site" evidence="1">
    <location>
        <begin position="111"/>
        <end position="112"/>
    </location>
    <ligand>
        <name>L-arginine</name>
        <dbReference type="ChEBI" id="CHEBI:32682"/>
    </ligand>
</feature>
<feature type="binding site" evidence="1">
    <location>
        <position position="274"/>
    </location>
    <ligand>
        <name>L-arginine</name>
        <dbReference type="ChEBI" id="CHEBI:32682"/>
    </ligand>
</feature>
<feature type="binding site" evidence="1">
    <location>
        <begin position="280"/>
        <end position="281"/>
    </location>
    <ligand>
        <name>L-arginine</name>
        <dbReference type="ChEBI" id="CHEBI:32682"/>
    </ligand>
</feature>
<feature type="binding site" evidence="1">
    <location>
        <begin position="300"/>
        <end position="304"/>
    </location>
    <ligand>
        <name>L-arginine</name>
        <dbReference type="ChEBI" id="CHEBI:32682"/>
    </ligand>
</feature>
<feature type="modified residue" description="Phosphoserine" evidence="1">
    <location>
        <position position="14"/>
    </location>
</feature>
<gene>
    <name evidence="1" type="primary">CASTOR1</name>
    <name evidence="1" type="synonym">GATSL3</name>
</gene>
<organism>
    <name type="scientific">Bos taurus</name>
    <name type="common">Bovine</name>
    <dbReference type="NCBI Taxonomy" id="9913"/>
    <lineage>
        <taxon>Eukaryota</taxon>
        <taxon>Metazoa</taxon>
        <taxon>Chordata</taxon>
        <taxon>Craniata</taxon>
        <taxon>Vertebrata</taxon>
        <taxon>Euteleostomi</taxon>
        <taxon>Mammalia</taxon>
        <taxon>Eutheria</taxon>
        <taxon>Laurasiatheria</taxon>
        <taxon>Artiodactyla</taxon>
        <taxon>Ruminantia</taxon>
        <taxon>Pecora</taxon>
        <taxon>Bovidae</taxon>
        <taxon>Bovinae</taxon>
        <taxon>Bos</taxon>
    </lineage>
</organism>
<dbReference type="EMBL" id="BT026316">
    <property type="protein sequence ID" value="ABG81472.1"/>
    <property type="molecule type" value="mRNA"/>
</dbReference>
<dbReference type="RefSeq" id="NP_001074983.1">
    <property type="nucleotide sequence ID" value="NM_001081514.1"/>
</dbReference>
<dbReference type="SMR" id="Q0V8A3"/>
<dbReference type="FunCoup" id="Q0V8A3">
    <property type="interactions" value="82"/>
</dbReference>
<dbReference type="STRING" id="9913.ENSBTAP00000024074"/>
<dbReference type="PaxDb" id="9913-ENSBTAP00000024074"/>
<dbReference type="GeneID" id="506974"/>
<dbReference type="KEGG" id="bta:506974"/>
<dbReference type="CTD" id="652968"/>
<dbReference type="VEuPathDB" id="HostDB:ENSBTAG00000018084"/>
<dbReference type="eggNOG" id="ENOG502QV83">
    <property type="taxonomic scope" value="Eukaryota"/>
</dbReference>
<dbReference type="HOGENOM" id="CLU_057799_0_0_1"/>
<dbReference type="InParanoid" id="Q0V8A3"/>
<dbReference type="OMA" id="HFTHPLI"/>
<dbReference type="OrthoDB" id="58529at2759"/>
<dbReference type="TreeFam" id="TF331648"/>
<dbReference type="Reactome" id="R-BTA-9639288">
    <property type="pathway name" value="Amino acids regulate mTORC1"/>
</dbReference>
<dbReference type="Proteomes" id="UP000009136">
    <property type="component" value="Chromosome 17"/>
</dbReference>
<dbReference type="Bgee" id="ENSBTAG00000018084">
    <property type="expression patterns" value="Expressed in cortex of kidney and 105 other cell types or tissues"/>
</dbReference>
<dbReference type="GO" id="GO:0005829">
    <property type="term" value="C:cytosol"/>
    <property type="evidence" value="ECO:0000250"/>
    <property type="project" value="UniProtKB"/>
</dbReference>
<dbReference type="GO" id="GO:0034618">
    <property type="term" value="F:arginine binding"/>
    <property type="evidence" value="ECO:0000250"/>
    <property type="project" value="UniProtKB"/>
</dbReference>
<dbReference type="GO" id="GO:0140311">
    <property type="term" value="F:protein sequestering activity"/>
    <property type="evidence" value="ECO:0000250"/>
    <property type="project" value="UniProtKB"/>
</dbReference>
<dbReference type="GO" id="GO:1903577">
    <property type="term" value="P:cellular response to L-arginine"/>
    <property type="evidence" value="ECO:0000250"/>
    <property type="project" value="UniProtKB"/>
</dbReference>
<dbReference type="GO" id="GO:1904262">
    <property type="term" value="P:negative regulation of TORC1 signaling"/>
    <property type="evidence" value="ECO:0000250"/>
    <property type="project" value="UniProtKB"/>
</dbReference>
<dbReference type="FunFam" id="3.30.2130.10:FF:000003">
    <property type="entry name" value="Cytosolic arginine sensor for mTORC1 subunit 1"/>
    <property type="match status" value="1"/>
</dbReference>
<dbReference type="FunFam" id="3.30.2130.10:FF:000004">
    <property type="entry name" value="Cytosolic arginine sensor for mTORC1 subunit 1"/>
    <property type="match status" value="1"/>
</dbReference>
<dbReference type="Gene3D" id="3.30.2130.10">
    <property type="entry name" value="VC0802-like"/>
    <property type="match status" value="2"/>
</dbReference>
<dbReference type="InterPro" id="IPR045865">
    <property type="entry name" value="ACT-like_dom_sf"/>
</dbReference>
<dbReference type="InterPro" id="IPR049479">
    <property type="entry name" value="CASTOR1_ACT-like"/>
</dbReference>
<dbReference type="InterPro" id="IPR040778">
    <property type="entry name" value="CASTOR1_N"/>
</dbReference>
<dbReference type="InterPro" id="IPR027795">
    <property type="entry name" value="CASTOR_ACT_dom"/>
</dbReference>
<dbReference type="InterPro" id="IPR026249">
    <property type="entry name" value="CASTOR_fam"/>
</dbReference>
<dbReference type="InterPro" id="IPR051719">
    <property type="entry name" value="CASTOR_mTORC1"/>
</dbReference>
<dbReference type="PANTHER" id="PTHR31131">
    <property type="entry name" value="CHROMOSOME 1, WHOLE GENOME SHOTGUN SEQUENCE"/>
    <property type="match status" value="1"/>
</dbReference>
<dbReference type="PANTHER" id="PTHR31131:SF3">
    <property type="entry name" value="CYTOSOLIC ARGININE SENSOR FOR MTORC1 SUBUNIT 1"/>
    <property type="match status" value="1"/>
</dbReference>
<dbReference type="Pfam" id="PF13840">
    <property type="entry name" value="ACT_7"/>
    <property type="match status" value="2"/>
</dbReference>
<dbReference type="Pfam" id="PF21389">
    <property type="entry name" value="CASTOR1_ACT-like"/>
    <property type="match status" value="1"/>
</dbReference>
<dbReference type="Pfam" id="PF18700">
    <property type="entry name" value="Castor1_N"/>
    <property type="match status" value="1"/>
</dbReference>
<dbReference type="PRINTS" id="PR02078">
    <property type="entry name" value="GATSLIKEFMLY"/>
</dbReference>
<dbReference type="SUPFAM" id="SSF55021">
    <property type="entry name" value="ACT-like"/>
    <property type="match status" value="2"/>
</dbReference>